<reference key="1">
    <citation type="journal article" date="1998" name="J. Bacteriol.">
        <title>Regulation of lactose utilization genes in Staphylococcus xylosus.</title>
        <authorList>
            <person name="Bassias J."/>
            <person name="Brueckner R."/>
        </authorList>
    </citation>
    <scope>NUCLEOTIDE SEQUENCE [GENOMIC DNA]</scope>
    <source>
        <strain>DSM 20267 / Isolate C2A</strain>
    </source>
</reference>
<keyword id="KW-0238">DNA-binding</keyword>
<keyword id="KW-0804">Transcription</keyword>
<keyword id="KW-0805">Transcription regulation</keyword>
<proteinExistence type="inferred from homology"/>
<protein>
    <recommendedName>
        <fullName>Uncharacterized HTH-type transcriptional regulator in lacR 5'region</fullName>
    </recommendedName>
</protein>
<comment type="similarity">
    <text evidence="2">Belongs to the LysR transcriptional regulatory family.</text>
</comment>
<accession>O33812</accession>
<evidence type="ECO:0000255" key="1">
    <source>
        <dbReference type="PROSITE-ProRule" id="PRU00253"/>
    </source>
</evidence>
<evidence type="ECO:0000305" key="2"/>
<dbReference type="EMBL" id="Y14599">
    <property type="protein sequence ID" value="CAA74934.1"/>
    <property type="molecule type" value="Genomic_DNA"/>
</dbReference>
<dbReference type="SMR" id="O33812"/>
<dbReference type="STRING" id="1288.AWC37_11790"/>
<dbReference type="eggNOG" id="COG0583">
    <property type="taxonomic scope" value="Bacteria"/>
</dbReference>
<dbReference type="GO" id="GO:0003700">
    <property type="term" value="F:DNA-binding transcription factor activity"/>
    <property type="evidence" value="ECO:0007669"/>
    <property type="project" value="InterPro"/>
</dbReference>
<dbReference type="GO" id="GO:0000976">
    <property type="term" value="F:transcription cis-regulatory region binding"/>
    <property type="evidence" value="ECO:0007669"/>
    <property type="project" value="TreeGrafter"/>
</dbReference>
<dbReference type="Gene3D" id="3.40.190.10">
    <property type="entry name" value="Periplasmic binding protein-like II"/>
    <property type="match status" value="2"/>
</dbReference>
<dbReference type="Gene3D" id="1.10.10.10">
    <property type="entry name" value="Winged helix-like DNA-binding domain superfamily/Winged helix DNA-binding domain"/>
    <property type="match status" value="1"/>
</dbReference>
<dbReference type="InterPro" id="IPR005119">
    <property type="entry name" value="LysR_subst-bd"/>
</dbReference>
<dbReference type="InterPro" id="IPR000847">
    <property type="entry name" value="Tscrpt_reg_HTH_LysR"/>
</dbReference>
<dbReference type="InterPro" id="IPR036388">
    <property type="entry name" value="WH-like_DNA-bd_sf"/>
</dbReference>
<dbReference type="InterPro" id="IPR036390">
    <property type="entry name" value="WH_DNA-bd_sf"/>
</dbReference>
<dbReference type="PANTHER" id="PTHR30126">
    <property type="entry name" value="HTH-TYPE TRANSCRIPTIONAL REGULATOR"/>
    <property type="match status" value="1"/>
</dbReference>
<dbReference type="PANTHER" id="PTHR30126:SF39">
    <property type="entry name" value="HTH-TYPE TRANSCRIPTIONAL REGULATOR CYSL"/>
    <property type="match status" value="1"/>
</dbReference>
<dbReference type="Pfam" id="PF00126">
    <property type="entry name" value="HTH_1"/>
    <property type="match status" value="1"/>
</dbReference>
<dbReference type="Pfam" id="PF03466">
    <property type="entry name" value="LysR_substrate"/>
    <property type="match status" value="1"/>
</dbReference>
<dbReference type="PRINTS" id="PR00039">
    <property type="entry name" value="HTHLYSR"/>
</dbReference>
<dbReference type="SUPFAM" id="SSF53850">
    <property type="entry name" value="Periplasmic binding protein-like II"/>
    <property type="match status" value="1"/>
</dbReference>
<dbReference type="SUPFAM" id="SSF46785">
    <property type="entry name" value="Winged helix' DNA-binding domain"/>
    <property type="match status" value="1"/>
</dbReference>
<dbReference type="PROSITE" id="PS50931">
    <property type="entry name" value="HTH_LYSR"/>
    <property type="match status" value="1"/>
</dbReference>
<sequence length="270" mass="30924">LTEVVKAQSFTKAAENLYTSQPSISRDIKRLENDYDVKVFEFKHSKMTLTSDGEKLYQYVLQRNYLEQALRQDLKMQNNAVAGDLKLGSSFTFGEYRLSRQLTKLAQMYPELHIHVHLDNSETIVEQIKNNIVDVGIVEKKIQNNAIISTPIAQDEIVLIKKKSSSSNLETCFIREQGSGTRVYQENGLNQLSLNPYLVVINNTSLIKSMVHAGNGFSIVSKSTLTSEDLEQLEVINLDIERFFYLILHKDKYIDEKMKRVISVLKQNVE</sequence>
<feature type="chain" id="PRO_0000105830" description="Uncharacterized HTH-type transcriptional regulator in lacR 5'region">
    <location>
        <begin position="1" status="less than"/>
        <end position="270"/>
    </location>
</feature>
<feature type="domain" description="HTH lysR-type" evidence="1">
    <location>
        <begin position="1" status="less than"/>
        <end position="50"/>
    </location>
</feature>
<feature type="DNA-binding region" description="H-T-H motif" evidence="1">
    <location>
        <begin position="10"/>
        <end position="29"/>
    </location>
</feature>
<feature type="non-terminal residue">
    <location>
        <position position="1"/>
    </location>
</feature>
<name>YLAC_STAXY</name>
<organism>
    <name type="scientific">Staphylococcus xylosus</name>
    <dbReference type="NCBI Taxonomy" id="1288"/>
    <lineage>
        <taxon>Bacteria</taxon>
        <taxon>Bacillati</taxon>
        <taxon>Bacillota</taxon>
        <taxon>Bacilli</taxon>
        <taxon>Bacillales</taxon>
        <taxon>Staphylococcaceae</taxon>
        <taxon>Staphylococcus</taxon>
    </lineage>
</organism>